<keyword id="KW-0004">4Fe-4S</keyword>
<keyword id="KW-0963">Cytoplasm</keyword>
<keyword id="KW-1015">Disulfide bond</keyword>
<keyword id="KW-0408">Iron</keyword>
<keyword id="KW-0411">Iron-sulfur</keyword>
<keyword id="KW-0479">Metal-binding</keyword>
<keyword id="KW-0489">Methyltransferase</keyword>
<keyword id="KW-1185">Reference proteome</keyword>
<keyword id="KW-0698">rRNA processing</keyword>
<keyword id="KW-0949">S-adenosyl-L-methionine</keyword>
<keyword id="KW-0808">Transferase</keyword>
<keyword id="KW-0819">tRNA processing</keyword>
<organism>
    <name type="scientific">Nitrosospira multiformis (strain ATCC 25196 / NCIMB 11849 / C 71)</name>
    <dbReference type="NCBI Taxonomy" id="323848"/>
    <lineage>
        <taxon>Bacteria</taxon>
        <taxon>Pseudomonadati</taxon>
        <taxon>Pseudomonadota</taxon>
        <taxon>Betaproteobacteria</taxon>
        <taxon>Nitrosomonadales</taxon>
        <taxon>Nitrosomonadaceae</taxon>
        <taxon>Nitrosospira</taxon>
    </lineage>
</organism>
<feature type="chain" id="PRO_0000350287" description="Dual-specificity RNA methyltransferase RlmN">
    <location>
        <begin position="1"/>
        <end position="365"/>
    </location>
</feature>
<feature type="domain" description="Radical SAM core" evidence="2">
    <location>
        <begin position="97"/>
        <end position="337"/>
    </location>
</feature>
<feature type="active site" description="Proton acceptor" evidence="1">
    <location>
        <position position="91"/>
    </location>
</feature>
<feature type="active site" description="S-methylcysteine intermediate" evidence="1">
    <location>
        <position position="342"/>
    </location>
</feature>
<feature type="binding site" evidence="1">
    <location>
        <position position="111"/>
    </location>
    <ligand>
        <name>[4Fe-4S] cluster</name>
        <dbReference type="ChEBI" id="CHEBI:49883"/>
        <note>4Fe-4S-S-AdoMet</note>
    </ligand>
</feature>
<feature type="binding site" evidence="1">
    <location>
        <position position="115"/>
    </location>
    <ligand>
        <name>[4Fe-4S] cluster</name>
        <dbReference type="ChEBI" id="CHEBI:49883"/>
        <note>4Fe-4S-S-AdoMet</note>
    </ligand>
</feature>
<feature type="binding site" evidence="1">
    <location>
        <position position="118"/>
    </location>
    <ligand>
        <name>[4Fe-4S] cluster</name>
        <dbReference type="ChEBI" id="CHEBI:49883"/>
        <note>4Fe-4S-S-AdoMet</note>
    </ligand>
</feature>
<feature type="binding site" evidence="1">
    <location>
        <begin position="168"/>
        <end position="169"/>
    </location>
    <ligand>
        <name>S-adenosyl-L-methionine</name>
        <dbReference type="ChEBI" id="CHEBI:59789"/>
    </ligand>
</feature>
<feature type="binding site" evidence="1">
    <location>
        <position position="200"/>
    </location>
    <ligand>
        <name>S-adenosyl-L-methionine</name>
        <dbReference type="ChEBI" id="CHEBI:59789"/>
    </ligand>
</feature>
<feature type="binding site" evidence="1">
    <location>
        <begin position="222"/>
        <end position="224"/>
    </location>
    <ligand>
        <name>S-adenosyl-L-methionine</name>
        <dbReference type="ChEBI" id="CHEBI:59789"/>
    </ligand>
</feature>
<feature type="binding site" evidence="1">
    <location>
        <position position="299"/>
    </location>
    <ligand>
        <name>S-adenosyl-L-methionine</name>
        <dbReference type="ChEBI" id="CHEBI:59789"/>
    </ligand>
</feature>
<feature type="disulfide bond" description="(transient)" evidence="1">
    <location>
        <begin position="104"/>
        <end position="342"/>
    </location>
</feature>
<gene>
    <name evidence="1" type="primary">rlmN</name>
    <name type="ordered locus">Nmul_A2379</name>
</gene>
<sequence length="365" mass="40003">MSINLLDFDAKGLTGFCAEIGEKPFRARQLLRWIHRTGEADFDAMSDLAKGLREKLAAAAVIEPPKVISDHTASDGTRKWLLSVGAGNGIETVYIPETSRGTLCISSQVGCALACAFCSTGRQGFNRNLTVAEIIGQLWWANKALTETFTSEAGRERPITNIVMMGMGEPLTNFENVVTSLDLMLDDNAYGLSRRRVTVSTSGIIPAMDRLRERCPVALAVSLHAPNDALRDQLVPINRKYPIRELLGACERYLQSAPRDFITFEYVMLDGVNDSVAQARELVQLVRDIPCKLNLIPFNPFPDSGFRRSSANAVSRFRDVLMEAGLVTTVRKTRGDDIAAACGQLAGKVLDKTRRVPRNIAEAAG</sequence>
<evidence type="ECO:0000255" key="1">
    <source>
        <dbReference type="HAMAP-Rule" id="MF_01849"/>
    </source>
</evidence>
<evidence type="ECO:0000255" key="2">
    <source>
        <dbReference type="PROSITE-ProRule" id="PRU01266"/>
    </source>
</evidence>
<comment type="function">
    <text evidence="1">Specifically methylates position 2 of adenine 2503 in 23S rRNA and position 2 of adenine 37 in tRNAs. m2A2503 modification seems to play a crucial role in the proofreading step occurring at the peptidyl transferase center and thus would serve to optimize ribosomal fidelity.</text>
</comment>
<comment type="catalytic activity">
    <reaction evidence="1">
        <text>adenosine(2503) in 23S rRNA + 2 reduced [2Fe-2S]-[ferredoxin] + 2 S-adenosyl-L-methionine = 2-methyladenosine(2503) in 23S rRNA + 5'-deoxyadenosine + L-methionine + 2 oxidized [2Fe-2S]-[ferredoxin] + S-adenosyl-L-homocysteine</text>
        <dbReference type="Rhea" id="RHEA:42916"/>
        <dbReference type="Rhea" id="RHEA-COMP:10000"/>
        <dbReference type="Rhea" id="RHEA-COMP:10001"/>
        <dbReference type="Rhea" id="RHEA-COMP:10152"/>
        <dbReference type="Rhea" id="RHEA-COMP:10282"/>
        <dbReference type="ChEBI" id="CHEBI:17319"/>
        <dbReference type="ChEBI" id="CHEBI:33737"/>
        <dbReference type="ChEBI" id="CHEBI:33738"/>
        <dbReference type="ChEBI" id="CHEBI:57844"/>
        <dbReference type="ChEBI" id="CHEBI:57856"/>
        <dbReference type="ChEBI" id="CHEBI:59789"/>
        <dbReference type="ChEBI" id="CHEBI:74411"/>
        <dbReference type="ChEBI" id="CHEBI:74497"/>
        <dbReference type="EC" id="2.1.1.192"/>
    </reaction>
</comment>
<comment type="catalytic activity">
    <reaction evidence="1">
        <text>adenosine(37) in tRNA + 2 reduced [2Fe-2S]-[ferredoxin] + 2 S-adenosyl-L-methionine = 2-methyladenosine(37) in tRNA + 5'-deoxyadenosine + L-methionine + 2 oxidized [2Fe-2S]-[ferredoxin] + S-adenosyl-L-homocysteine</text>
        <dbReference type="Rhea" id="RHEA:43332"/>
        <dbReference type="Rhea" id="RHEA-COMP:10000"/>
        <dbReference type="Rhea" id="RHEA-COMP:10001"/>
        <dbReference type="Rhea" id="RHEA-COMP:10162"/>
        <dbReference type="Rhea" id="RHEA-COMP:10485"/>
        <dbReference type="ChEBI" id="CHEBI:17319"/>
        <dbReference type="ChEBI" id="CHEBI:33737"/>
        <dbReference type="ChEBI" id="CHEBI:33738"/>
        <dbReference type="ChEBI" id="CHEBI:57844"/>
        <dbReference type="ChEBI" id="CHEBI:57856"/>
        <dbReference type="ChEBI" id="CHEBI:59789"/>
        <dbReference type="ChEBI" id="CHEBI:74411"/>
        <dbReference type="ChEBI" id="CHEBI:74497"/>
        <dbReference type="EC" id="2.1.1.192"/>
    </reaction>
</comment>
<comment type="cofactor">
    <cofactor evidence="1">
        <name>[4Fe-4S] cluster</name>
        <dbReference type="ChEBI" id="CHEBI:49883"/>
    </cofactor>
    <text evidence="1">Binds 1 [4Fe-4S] cluster. The cluster is coordinated with 3 cysteines and an exchangeable S-adenosyl-L-methionine.</text>
</comment>
<comment type="subcellular location">
    <subcellularLocation>
        <location evidence="1">Cytoplasm</location>
    </subcellularLocation>
</comment>
<comment type="miscellaneous">
    <text evidence="1">Reaction proceeds by a ping-pong mechanism involving intermediate methylation of a conserved cysteine residue.</text>
</comment>
<comment type="similarity">
    <text evidence="1">Belongs to the radical SAM superfamily. RlmN family.</text>
</comment>
<reference key="1">
    <citation type="submission" date="2005-08" db="EMBL/GenBank/DDBJ databases">
        <title>Complete sequence of chromosome 1 of Nitrosospira multiformis ATCC 25196.</title>
        <authorList>
            <person name="Copeland A."/>
            <person name="Lucas S."/>
            <person name="Lapidus A."/>
            <person name="Barry K."/>
            <person name="Detter J.C."/>
            <person name="Glavina T."/>
            <person name="Hammon N."/>
            <person name="Israni S."/>
            <person name="Pitluck S."/>
            <person name="Chain P."/>
            <person name="Malfatti S."/>
            <person name="Shin M."/>
            <person name="Vergez L."/>
            <person name="Schmutz J."/>
            <person name="Larimer F."/>
            <person name="Land M."/>
            <person name="Hauser L."/>
            <person name="Kyrpides N."/>
            <person name="Lykidis A."/>
            <person name="Richardson P."/>
        </authorList>
    </citation>
    <scope>NUCLEOTIDE SEQUENCE [LARGE SCALE GENOMIC DNA]</scope>
    <source>
        <strain>ATCC 25196 / NCIMB 11849 / C 71</strain>
    </source>
</reference>
<proteinExistence type="inferred from homology"/>
<dbReference type="EC" id="2.1.1.192" evidence="1"/>
<dbReference type="EMBL" id="CP000103">
    <property type="protein sequence ID" value="ABB75668.1"/>
    <property type="molecule type" value="Genomic_DNA"/>
</dbReference>
<dbReference type="RefSeq" id="WP_011381669.1">
    <property type="nucleotide sequence ID" value="NC_007614.1"/>
</dbReference>
<dbReference type="SMR" id="Q2Y6F3"/>
<dbReference type="STRING" id="323848.Nmul_A2379"/>
<dbReference type="KEGG" id="nmu:Nmul_A2379"/>
<dbReference type="eggNOG" id="COG0820">
    <property type="taxonomic scope" value="Bacteria"/>
</dbReference>
<dbReference type="HOGENOM" id="CLU_029101_0_0_4"/>
<dbReference type="OrthoDB" id="9793973at2"/>
<dbReference type="Proteomes" id="UP000002718">
    <property type="component" value="Chromosome"/>
</dbReference>
<dbReference type="GO" id="GO:0005737">
    <property type="term" value="C:cytoplasm"/>
    <property type="evidence" value="ECO:0007669"/>
    <property type="project" value="UniProtKB-SubCell"/>
</dbReference>
<dbReference type="GO" id="GO:0051539">
    <property type="term" value="F:4 iron, 4 sulfur cluster binding"/>
    <property type="evidence" value="ECO:0007669"/>
    <property type="project" value="UniProtKB-UniRule"/>
</dbReference>
<dbReference type="GO" id="GO:0046872">
    <property type="term" value="F:metal ion binding"/>
    <property type="evidence" value="ECO:0007669"/>
    <property type="project" value="UniProtKB-KW"/>
</dbReference>
<dbReference type="GO" id="GO:0070040">
    <property type="term" value="F:rRNA (adenine(2503)-C2-)-methyltransferase activity"/>
    <property type="evidence" value="ECO:0007669"/>
    <property type="project" value="UniProtKB-UniRule"/>
</dbReference>
<dbReference type="GO" id="GO:0019843">
    <property type="term" value="F:rRNA binding"/>
    <property type="evidence" value="ECO:0007669"/>
    <property type="project" value="UniProtKB-UniRule"/>
</dbReference>
<dbReference type="GO" id="GO:0002935">
    <property type="term" value="F:tRNA (adenine(37)-C2)-methyltransferase activity"/>
    <property type="evidence" value="ECO:0007669"/>
    <property type="project" value="UniProtKB-UniRule"/>
</dbReference>
<dbReference type="GO" id="GO:0000049">
    <property type="term" value="F:tRNA binding"/>
    <property type="evidence" value="ECO:0007669"/>
    <property type="project" value="UniProtKB-UniRule"/>
</dbReference>
<dbReference type="GO" id="GO:0070475">
    <property type="term" value="P:rRNA base methylation"/>
    <property type="evidence" value="ECO:0007669"/>
    <property type="project" value="UniProtKB-UniRule"/>
</dbReference>
<dbReference type="GO" id="GO:0030488">
    <property type="term" value="P:tRNA methylation"/>
    <property type="evidence" value="ECO:0007669"/>
    <property type="project" value="UniProtKB-UniRule"/>
</dbReference>
<dbReference type="CDD" id="cd01335">
    <property type="entry name" value="Radical_SAM"/>
    <property type="match status" value="1"/>
</dbReference>
<dbReference type="FunFam" id="1.10.150.530:FF:000003">
    <property type="entry name" value="Dual-specificity RNA methyltransferase RlmN"/>
    <property type="match status" value="1"/>
</dbReference>
<dbReference type="FunFam" id="3.20.20.70:FF:000008">
    <property type="entry name" value="Dual-specificity RNA methyltransferase RlmN"/>
    <property type="match status" value="1"/>
</dbReference>
<dbReference type="Gene3D" id="1.10.150.530">
    <property type="match status" value="1"/>
</dbReference>
<dbReference type="Gene3D" id="3.20.20.70">
    <property type="entry name" value="Aldolase class I"/>
    <property type="match status" value="1"/>
</dbReference>
<dbReference type="HAMAP" id="MF_01849">
    <property type="entry name" value="RNA_methyltr_RlmN"/>
    <property type="match status" value="1"/>
</dbReference>
<dbReference type="InterPro" id="IPR013785">
    <property type="entry name" value="Aldolase_TIM"/>
</dbReference>
<dbReference type="InterPro" id="IPR040072">
    <property type="entry name" value="Methyltransferase_A"/>
</dbReference>
<dbReference type="InterPro" id="IPR048641">
    <property type="entry name" value="RlmN_N"/>
</dbReference>
<dbReference type="InterPro" id="IPR027492">
    <property type="entry name" value="RNA_MTrfase_RlmN"/>
</dbReference>
<dbReference type="InterPro" id="IPR004383">
    <property type="entry name" value="rRNA_lsu_MTrfase_RlmN/Cfr"/>
</dbReference>
<dbReference type="InterPro" id="IPR007197">
    <property type="entry name" value="rSAM"/>
</dbReference>
<dbReference type="NCBIfam" id="TIGR00048">
    <property type="entry name" value="rRNA_mod_RlmN"/>
    <property type="match status" value="1"/>
</dbReference>
<dbReference type="PANTHER" id="PTHR30544">
    <property type="entry name" value="23S RRNA METHYLTRANSFERASE"/>
    <property type="match status" value="1"/>
</dbReference>
<dbReference type="PANTHER" id="PTHR30544:SF5">
    <property type="entry name" value="RADICAL SAM CORE DOMAIN-CONTAINING PROTEIN"/>
    <property type="match status" value="1"/>
</dbReference>
<dbReference type="Pfam" id="PF04055">
    <property type="entry name" value="Radical_SAM"/>
    <property type="match status" value="1"/>
</dbReference>
<dbReference type="Pfam" id="PF21016">
    <property type="entry name" value="RlmN_N"/>
    <property type="match status" value="1"/>
</dbReference>
<dbReference type="PIRSF" id="PIRSF006004">
    <property type="entry name" value="CHP00048"/>
    <property type="match status" value="1"/>
</dbReference>
<dbReference type="SFLD" id="SFLDF00275">
    <property type="entry name" value="adenosine_C2_methyltransferase"/>
    <property type="match status" value="1"/>
</dbReference>
<dbReference type="SFLD" id="SFLDS00029">
    <property type="entry name" value="Radical_SAM"/>
    <property type="match status" value="1"/>
</dbReference>
<dbReference type="SUPFAM" id="SSF102114">
    <property type="entry name" value="Radical SAM enzymes"/>
    <property type="match status" value="1"/>
</dbReference>
<dbReference type="PROSITE" id="PS51918">
    <property type="entry name" value="RADICAL_SAM"/>
    <property type="match status" value="1"/>
</dbReference>
<accession>Q2Y6F3</accession>
<name>RLMN_NITMU</name>
<protein>
    <recommendedName>
        <fullName evidence="1">Dual-specificity RNA methyltransferase RlmN</fullName>
        <ecNumber evidence="1">2.1.1.192</ecNumber>
    </recommendedName>
    <alternativeName>
        <fullName evidence="1">23S rRNA (adenine(2503)-C(2))-methyltransferase</fullName>
    </alternativeName>
    <alternativeName>
        <fullName evidence="1">23S rRNA m2A2503 methyltransferase</fullName>
    </alternativeName>
    <alternativeName>
        <fullName evidence="1">Ribosomal RNA large subunit methyltransferase N</fullName>
    </alternativeName>
    <alternativeName>
        <fullName evidence="1">tRNA (adenine(37)-C(2))-methyltransferase</fullName>
    </alternativeName>
    <alternativeName>
        <fullName evidence="1">tRNA m2A37 methyltransferase</fullName>
    </alternativeName>
</protein>